<proteinExistence type="inferred from homology"/>
<keyword id="KW-0378">Hydrolase</keyword>
<keyword id="KW-1185">Reference proteome</keyword>
<name>RPPH_PHOLL</name>
<protein>
    <recommendedName>
        <fullName evidence="1">RNA pyrophosphohydrolase</fullName>
        <ecNumber evidence="1">3.6.1.-</ecNumber>
    </recommendedName>
    <alternativeName>
        <fullName evidence="1">(Di)nucleoside polyphosphate hydrolase</fullName>
    </alternativeName>
</protein>
<dbReference type="EC" id="3.6.1.-" evidence="1"/>
<dbReference type="EMBL" id="BX571861">
    <property type="protein sequence ID" value="CAE12915.1"/>
    <property type="molecule type" value="Genomic_DNA"/>
</dbReference>
<dbReference type="RefSeq" id="WP_011144996.1">
    <property type="nucleotide sequence ID" value="NC_005126.1"/>
</dbReference>
<dbReference type="SMR" id="Q7N8U7"/>
<dbReference type="STRING" id="243265.plu0620"/>
<dbReference type="GeneID" id="48846906"/>
<dbReference type="KEGG" id="plu:plu0620"/>
<dbReference type="eggNOG" id="COG0494">
    <property type="taxonomic scope" value="Bacteria"/>
</dbReference>
<dbReference type="HOGENOM" id="CLU_087195_3_2_6"/>
<dbReference type="OrthoDB" id="9816040at2"/>
<dbReference type="Proteomes" id="UP000002514">
    <property type="component" value="Chromosome"/>
</dbReference>
<dbReference type="GO" id="GO:0005737">
    <property type="term" value="C:cytoplasm"/>
    <property type="evidence" value="ECO:0007669"/>
    <property type="project" value="TreeGrafter"/>
</dbReference>
<dbReference type="GO" id="GO:0034353">
    <property type="term" value="F:mRNA 5'-diphosphatase activity"/>
    <property type="evidence" value="ECO:0007669"/>
    <property type="project" value="TreeGrafter"/>
</dbReference>
<dbReference type="GO" id="GO:0006402">
    <property type="term" value="P:mRNA catabolic process"/>
    <property type="evidence" value="ECO:0007669"/>
    <property type="project" value="TreeGrafter"/>
</dbReference>
<dbReference type="CDD" id="cd03671">
    <property type="entry name" value="NUDIX_Ap4A_hydrolase_plant_like"/>
    <property type="match status" value="1"/>
</dbReference>
<dbReference type="FunFam" id="3.90.79.10:FF:000001">
    <property type="entry name" value="RNA pyrophosphohydrolase"/>
    <property type="match status" value="1"/>
</dbReference>
<dbReference type="Gene3D" id="3.90.79.10">
    <property type="entry name" value="Nucleoside Triphosphate Pyrophosphohydrolase"/>
    <property type="match status" value="1"/>
</dbReference>
<dbReference type="HAMAP" id="MF_00298">
    <property type="entry name" value="Nudix_RppH"/>
    <property type="match status" value="1"/>
</dbReference>
<dbReference type="InterPro" id="IPR020476">
    <property type="entry name" value="Nudix_hydrolase"/>
</dbReference>
<dbReference type="InterPro" id="IPR015797">
    <property type="entry name" value="NUDIX_hydrolase-like_dom_sf"/>
</dbReference>
<dbReference type="InterPro" id="IPR020084">
    <property type="entry name" value="NUDIX_hydrolase_CS"/>
</dbReference>
<dbReference type="InterPro" id="IPR000086">
    <property type="entry name" value="NUDIX_hydrolase_dom"/>
</dbReference>
<dbReference type="InterPro" id="IPR022927">
    <property type="entry name" value="RppH"/>
</dbReference>
<dbReference type="NCBIfam" id="NF001934">
    <property type="entry name" value="PRK00714.1-1"/>
    <property type="match status" value="1"/>
</dbReference>
<dbReference type="NCBIfam" id="NF001937">
    <property type="entry name" value="PRK00714.1-4"/>
    <property type="match status" value="1"/>
</dbReference>
<dbReference type="NCBIfam" id="NF001938">
    <property type="entry name" value="PRK00714.1-5"/>
    <property type="match status" value="1"/>
</dbReference>
<dbReference type="PANTHER" id="PTHR23114">
    <property type="entry name" value="M7GPPPN-MRNA HYDROLASE"/>
    <property type="match status" value="1"/>
</dbReference>
<dbReference type="PANTHER" id="PTHR23114:SF17">
    <property type="entry name" value="M7GPPPN-MRNA HYDROLASE"/>
    <property type="match status" value="1"/>
</dbReference>
<dbReference type="Pfam" id="PF00293">
    <property type="entry name" value="NUDIX"/>
    <property type="match status" value="1"/>
</dbReference>
<dbReference type="PRINTS" id="PR00502">
    <property type="entry name" value="NUDIXFAMILY"/>
</dbReference>
<dbReference type="SUPFAM" id="SSF55811">
    <property type="entry name" value="Nudix"/>
    <property type="match status" value="1"/>
</dbReference>
<dbReference type="PROSITE" id="PS51462">
    <property type="entry name" value="NUDIX"/>
    <property type="match status" value="1"/>
</dbReference>
<dbReference type="PROSITE" id="PS00893">
    <property type="entry name" value="NUDIX_BOX"/>
    <property type="match status" value="1"/>
</dbReference>
<accession>Q7N8U7</accession>
<gene>
    <name evidence="1" type="primary">rppH</name>
    <name evidence="1" type="synonym">nudH</name>
    <name type="ordered locus">plu0620</name>
</gene>
<evidence type="ECO:0000255" key="1">
    <source>
        <dbReference type="HAMAP-Rule" id="MF_00298"/>
    </source>
</evidence>
<reference key="1">
    <citation type="journal article" date="2003" name="Nat. Biotechnol.">
        <title>The genome sequence of the entomopathogenic bacterium Photorhabdus luminescens.</title>
        <authorList>
            <person name="Duchaud E."/>
            <person name="Rusniok C."/>
            <person name="Frangeul L."/>
            <person name="Buchrieser C."/>
            <person name="Givaudan A."/>
            <person name="Taourit S."/>
            <person name="Bocs S."/>
            <person name="Boursaux-Eude C."/>
            <person name="Chandler M."/>
            <person name="Charles J.-F."/>
            <person name="Dassa E."/>
            <person name="Derose R."/>
            <person name="Derzelle S."/>
            <person name="Freyssinet G."/>
            <person name="Gaudriault S."/>
            <person name="Medigue C."/>
            <person name="Lanois A."/>
            <person name="Powell K."/>
            <person name="Siguier P."/>
            <person name="Vincent R."/>
            <person name="Wingate V."/>
            <person name="Zouine M."/>
            <person name="Glaser P."/>
            <person name="Boemare N."/>
            <person name="Danchin A."/>
            <person name="Kunst F."/>
        </authorList>
    </citation>
    <scope>NUCLEOTIDE SEQUENCE [LARGE SCALE GENOMIC DNA]</scope>
    <source>
        <strain>DSM 15139 / CIP 105565 / TT01</strain>
    </source>
</reference>
<feature type="chain" id="PRO_0000057016" description="RNA pyrophosphohydrolase">
    <location>
        <begin position="1"/>
        <end position="176"/>
    </location>
</feature>
<feature type="domain" description="Nudix hydrolase" evidence="1">
    <location>
        <begin position="6"/>
        <end position="149"/>
    </location>
</feature>
<feature type="short sequence motif" description="Nudix box">
    <location>
        <begin position="38"/>
        <end position="59"/>
    </location>
</feature>
<comment type="function">
    <text evidence="1">Accelerates the degradation of transcripts by removing pyrophosphate from the 5'-end of triphosphorylated RNA, leading to a more labile monophosphorylated state that can stimulate subsequent ribonuclease cleavage.</text>
</comment>
<comment type="cofactor">
    <cofactor evidence="1">
        <name>a divalent metal cation</name>
        <dbReference type="ChEBI" id="CHEBI:60240"/>
    </cofactor>
</comment>
<comment type="similarity">
    <text evidence="1">Belongs to the Nudix hydrolase family. RppH subfamily.</text>
</comment>
<sequence length="176" mass="21150">MIDDDGYRPNVGIVICNRQGQVLWARRYGQHSWQFPQGGINPGESPEQAMYRELYEEVGLGRKDVRILASTRNWLRYKLPKRLVRWDTRPVCIGQKQRWFLLQLLCNEEDINVQHSNTPEFDGWRWVSYWYPVRQVVSFKRDVYRRVMKEFASVVMPMQESVSLPRSSYSYRRKRS</sequence>
<organism>
    <name type="scientific">Photorhabdus laumondii subsp. laumondii (strain DSM 15139 / CIP 105565 / TT01)</name>
    <name type="common">Photorhabdus luminescens subsp. laumondii</name>
    <dbReference type="NCBI Taxonomy" id="243265"/>
    <lineage>
        <taxon>Bacteria</taxon>
        <taxon>Pseudomonadati</taxon>
        <taxon>Pseudomonadota</taxon>
        <taxon>Gammaproteobacteria</taxon>
        <taxon>Enterobacterales</taxon>
        <taxon>Morganellaceae</taxon>
        <taxon>Photorhabdus</taxon>
    </lineage>
</organism>